<proteinExistence type="inferred from homology"/>
<name>GG12F_HUMAN</name>
<protein>
    <recommendedName>
        <fullName>G antigen 12F</fullName>
        <shortName>GAGE-12F</shortName>
    </recommendedName>
</protein>
<reference key="1">
    <citation type="journal article" date="2005" name="Nature">
        <title>The DNA sequence of the human X chromosome.</title>
        <authorList>
            <person name="Ross M.T."/>
            <person name="Grafham D.V."/>
            <person name="Coffey A.J."/>
            <person name="Scherer S."/>
            <person name="McLay K."/>
            <person name="Muzny D."/>
            <person name="Platzer M."/>
            <person name="Howell G.R."/>
            <person name="Burrows C."/>
            <person name="Bird C.P."/>
            <person name="Frankish A."/>
            <person name="Lovell F.L."/>
            <person name="Howe K.L."/>
            <person name="Ashurst J.L."/>
            <person name="Fulton R.S."/>
            <person name="Sudbrak R."/>
            <person name="Wen G."/>
            <person name="Jones M.C."/>
            <person name="Hurles M.E."/>
            <person name="Andrews T.D."/>
            <person name="Scott C.E."/>
            <person name="Searle S."/>
            <person name="Ramser J."/>
            <person name="Whittaker A."/>
            <person name="Deadman R."/>
            <person name="Carter N.P."/>
            <person name="Hunt S.E."/>
            <person name="Chen R."/>
            <person name="Cree A."/>
            <person name="Gunaratne P."/>
            <person name="Havlak P."/>
            <person name="Hodgson A."/>
            <person name="Metzker M.L."/>
            <person name="Richards S."/>
            <person name="Scott G."/>
            <person name="Steffen D."/>
            <person name="Sodergren E."/>
            <person name="Wheeler D.A."/>
            <person name="Worley K.C."/>
            <person name="Ainscough R."/>
            <person name="Ambrose K.D."/>
            <person name="Ansari-Lari M.A."/>
            <person name="Aradhya S."/>
            <person name="Ashwell R.I."/>
            <person name="Babbage A.K."/>
            <person name="Bagguley C.L."/>
            <person name="Ballabio A."/>
            <person name="Banerjee R."/>
            <person name="Barker G.E."/>
            <person name="Barlow K.F."/>
            <person name="Barrett I.P."/>
            <person name="Bates K.N."/>
            <person name="Beare D.M."/>
            <person name="Beasley H."/>
            <person name="Beasley O."/>
            <person name="Beck A."/>
            <person name="Bethel G."/>
            <person name="Blechschmidt K."/>
            <person name="Brady N."/>
            <person name="Bray-Allen S."/>
            <person name="Bridgeman A.M."/>
            <person name="Brown A.J."/>
            <person name="Brown M.J."/>
            <person name="Bonnin D."/>
            <person name="Bruford E.A."/>
            <person name="Buhay C."/>
            <person name="Burch P."/>
            <person name="Burford D."/>
            <person name="Burgess J."/>
            <person name="Burrill W."/>
            <person name="Burton J."/>
            <person name="Bye J.M."/>
            <person name="Carder C."/>
            <person name="Carrel L."/>
            <person name="Chako J."/>
            <person name="Chapman J.C."/>
            <person name="Chavez D."/>
            <person name="Chen E."/>
            <person name="Chen G."/>
            <person name="Chen Y."/>
            <person name="Chen Z."/>
            <person name="Chinault C."/>
            <person name="Ciccodicola A."/>
            <person name="Clark S.Y."/>
            <person name="Clarke G."/>
            <person name="Clee C.M."/>
            <person name="Clegg S."/>
            <person name="Clerc-Blankenburg K."/>
            <person name="Clifford K."/>
            <person name="Cobley V."/>
            <person name="Cole C.G."/>
            <person name="Conquer J.S."/>
            <person name="Corby N."/>
            <person name="Connor R.E."/>
            <person name="David R."/>
            <person name="Davies J."/>
            <person name="Davis C."/>
            <person name="Davis J."/>
            <person name="Delgado O."/>
            <person name="Deshazo D."/>
            <person name="Dhami P."/>
            <person name="Ding Y."/>
            <person name="Dinh H."/>
            <person name="Dodsworth S."/>
            <person name="Draper H."/>
            <person name="Dugan-Rocha S."/>
            <person name="Dunham A."/>
            <person name="Dunn M."/>
            <person name="Durbin K.J."/>
            <person name="Dutta I."/>
            <person name="Eades T."/>
            <person name="Ellwood M."/>
            <person name="Emery-Cohen A."/>
            <person name="Errington H."/>
            <person name="Evans K.L."/>
            <person name="Faulkner L."/>
            <person name="Francis F."/>
            <person name="Frankland J."/>
            <person name="Fraser A.E."/>
            <person name="Galgoczy P."/>
            <person name="Gilbert J."/>
            <person name="Gill R."/>
            <person name="Gloeckner G."/>
            <person name="Gregory S.G."/>
            <person name="Gribble S."/>
            <person name="Griffiths C."/>
            <person name="Grocock R."/>
            <person name="Gu Y."/>
            <person name="Gwilliam R."/>
            <person name="Hamilton C."/>
            <person name="Hart E.A."/>
            <person name="Hawes A."/>
            <person name="Heath P.D."/>
            <person name="Heitmann K."/>
            <person name="Hennig S."/>
            <person name="Hernandez J."/>
            <person name="Hinzmann B."/>
            <person name="Ho S."/>
            <person name="Hoffs M."/>
            <person name="Howden P.J."/>
            <person name="Huckle E.J."/>
            <person name="Hume J."/>
            <person name="Hunt P.J."/>
            <person name="Hunt A.R."/>
            <person name="Isherwood J."/>
            <person name="Jacob L."/>
            <person name="Johnson D."/>
            <person name="Jones S."/>
            <person name="de Jong P.J."/>
            <person name="Joseph S.S."/>
            <person name="Keenan S."/>
            <person name="Kelly S."/>
            <person name="Kershaw J.K."/>
            <person name="Khan Z."/>
            <person name="Kioschis P."/>
            <person name="Klages S."/>
            <person name="Knights A.J."/>
            <person name="Kosiura A."/>
            <person name="Kovar-Smith C."/>
            <person name="Laird G.K."/>
            <person name="Langford C."/>
            <person name="Lawlor S."/>
            <person name="Leversha M."/>
            <person name="Lewis L."/>
            <person name="Liu W."/>
            <person name="Lloyd C."/>
            <person name="Lloyd D.M."/>
            <person name="Loulseged H."/>
            <person name="Loveland J.E."/>
            <person name="Lovell J.D."/>
            <person name="Lozado R."/>
            <person name="Lu J."/>
            <person name="Lyne R."/>
            <person name="Ma J."/>
            <person name="Maheshwari M."/>
            <person name="Matthews L.H."/>
            <person name="McDowall J."/>
            <person name="McLaren S."/>
            <person name="McMurray A."/>
            <person name="Meidl P."/>
            <person name="Meitinger T."/>
            <person name="Milne S."/>
            <person name="Miner G."/>
            <person name="Mistry S.L."/>
            <person name="Morgan M."/>
            <person name="Morris S."/>
            <person name="Mueller I."/>
            <person name="Mullikin J.C."/>
            <person name="Nguyen N."/>
            <person name="Nordsiek G."/>
            <person name="Nyakatura G."/>
            <person name="O'dell C.N."/>
            <person name="Okwuonu G."/>
            <person name="Palmer S."/>
            <person name="Pandian R."/>
            <person name="Parker D."/>
            <person name="Parrish J."/>
            <person name="Pasternak S."/>
            <person name="Patel D."/>
            <person name="Pearce A.V."/>
            <person name="Pearson D.M."/>
            <person name="Pelan S.E."/>
            <person name="Perez L."/>
            <person name="Porter K.M."/>
            <person name="Ramsey Y."/>
            <person name="Reichwald K."/>
            <person name="Rhodes S."/>
            <person name="Ridler K.A."/>
            <person name="Schlessinger D."/>
            <person name="Schueler M.G."/>
            <person name="Sehra H.K."/>
            <person name="Shaw-Smith C."/>
            <person name="Shen H."/>
            <person name="Sheridan E.M."/>
            <person name="Shownkeen R."/>
            <person name="Skuce C.D."/>
            <person name="Smith M.L."/>
            <person name="Sotheran E.C."/>
            <person name="Steingruber H.E."/>
            <person name="Steward C.A."/>
            <person name="Storey R."/>
            <person name="Swann R.M."/>
            <person name="Swarbreck D."/>
            <person name="Tabor P.E."/>
            <person name="Taudien S."/>
            <person name="Taylor T."/>
            <person name="Teague B."/>
            <person name="Thomas K."/>
            <person name="Thorpe A."/>
            <person name="Timms K."/>
            <person name="Tracey A."/>
            <person name="Trevanion S."/>
            <person name="Tromans A.C."/>
            <person name="d'Urso M."/>
            <person name="Verduzco D."/>
            <person name="Villasana D."/>
            <person name="Waldron L."/>
            <person name="Wall M."/>
            <person name="Wang Q."/>
            <person name="Warren J."/>
            <person name="Warry G.L."/>
            <person name="Wei X."/>
            <person name="West A."/>
            <person name="Whitehead S.L."/>
            <person name="Whiteley M.N."/>
            <person name="Wilkinson J.E."/>
            <person name="Willey D.L."/>
            <person name="Williams G."/>
            <person name="Williams L."/>
            <person name="Williamson A."/>
            <person name="Williamson H."/>
            <person name="Wilming L."/>
            <person name="Woodmansey R.L."/>
            <person name="Wray P.W."/>
            <person name="Yen J."/>
            <person name="Zhang J."/>
            <person name="Zhou J."/>
            <person name="Zoghbi H."/>
            <person name="Zorilla S."/>
            <person name="Buck D."/>
            <person name="Reinhardt R."/>
            <person name="Poustka A."/>
            <person name="Rosenthal A."/>
            <person name="Lehrach H."/>
            <person name="Meindl A."/>
            <person name="Minx P.J."/>
            <person name="Hillier L.W."/>
            <person name="Willard H.F."/>
            <person name="Wilson R.K."/>
            <person name="Waterston R.H."/>
            <person name="Rice C.M."/>
            <person name="Vaudin M."/>
            <person name="Coulson A."/>
            <person name="Nelson D.L."/>
            <person name="Weinstock G."/>
            <person name="Sulston J.E."/>
            <person name="Durbin R.M."/>
            <person name="Hubbard T."/>
            <person name="Gibbs R.A."/>
            <person name="Beck S."/>
            <person name="Rogers J."/>
            <person name="Bentley D.R."/>
        </authorList>
    </citation>
    <scope>NUCLEOTIDE SEQUENCE [LARGE SCALE GENOMIC DNA]</scope>
</reference>
<reference key="2">
    <citation type="journal article" date="2004" name="Genome Res.">
        <title>The status, quality, and expansion of the NIH full-length cDNA project: the Mammalian Gene Collection (MGC).</title>
        <authorList>
            <consortium name="The MGC Project Team"/>
        </authorList>
    </citation>
    <scope>NUCLEOTIDE SEQUENCE [LARGE SCALE MRNA] (ISOFORM 2)</scope>
    <source>
        <tissue>Chondrosarcoma</tissue>
    </source>
</reference>
<reference key="3">
    <citation type="journal article" date="2008" name="Tissue Antigens">
        <title>An overview of the GAGE cancer/testis antigen family with the inclusion of newly identified members.</title>
        <authorList>
            <person name="Gjerstorff M.F."/>
            <person name="Ditzel H.J."/>
        </authorList>
    </citation>
    <scope>GAGE FAMILY</scope>
</reference>
<accession>P0CL80</accession>
<accession>Q66I50</accession>
<comment type="subunit">
    <text evidence="1">Forms tetramers.</text>
</comment>
<comment type="alternative products">
    <event type="alternative splicing"/>
    <isoform>
        <id>P0CL80-1</id>
        <name>1</name>
        <sequence type="displayed"/>
    </isoform>
    <isoform>
        <id>P0CL80-2</id>
        <name>2</name>
        <sequence type="described" ref="VSP_040953"/>
    </isoform>
</comment>
<comment type="miscellaneous">
    <text>This gene belongs to a multigene family expressed in a large variety of tumors whereas in normal tissues, expression is restricted to germ cells. These genes organized in clustered repeats, have a high degree of predicted sequence identity, but differ by scattered single nucleotide substitution. Their sequences contain either the antigenic peptide YYWPRPRRY or YRPRPRRY which is recognized by cytotoxic T-cells.</text>
</comment>
<comment type="similarity">
    <text evidence="4">Belongs to the GAGE family.</text>
</comment>
<comment type="caution">
    <text evidence="4">The first GAGE nomenclature was based on identified mRNA sequences, but the high identity of the GAGE members made impossible to separate products of paralogous genes from polymorph products. PubMed:18179644 presented a new GAGE gene nomenclature based on the identified genes and their products.</text>
</comment>
<sequence>MSWRGRSTYYWPRPRRYVQPPEMIGPMRPEQFSDEVEPATPEEGEPATQRQDPAAAQEGEDEGASAGQGPKPEAHSQEQGHPQTGCECEDGPDGQEMDPPNPEEVKTPEEGEKQSQC</sequence>
<gene>
    <name type="primary">GAGE12F</name>
</gene>
<dbReference type="EMBL" id="AC142497">
    <property type="status" value="NOT_ANNOTATED_CDS"/>
    <property type="molecule type" value="Genomic_DNA"/>
</dbReference>
<dbReference type="EMBL" id="BC081536">
    <property type="protein sequence ID" value="AAH81536.1"/>
    <property type="molecule type" value="mRNA"/>
</dbReference>
<dbReference type="CCDS" id="CCDS43946.1">
    <molecule id="P0CL80-1"/>
</dbReference>
<dbReference type="RefSeq" id="NP_001091875.1">
    <molecule id="P0CL80-1"/>
    <property type="nucleotide sequence ID" value="NM_001098405.3"/>
</dbReference>
<dbReference type="RefSeq" id="NP_001091879.1">
    <molecule id="P0CL80-1"/>
    <property type="nucleotide sequence ID" value="NM_001098409.1"/>
</dbReference>
<dbReference type="RefSeq" id="NP_001468.1">
    <molecule id="P0CL80-1"/>
    <property type="nucleotide sequence ID" value="NM_001477.1"/>
</dbReference>
<dbReference type="RefSeq" id="NP_066946.1">
    <molecule id="P0CL80-1"/>
    <property type="nucleotide sequence ID" value="NM_021123.2"/>
</dbReference>
<dbReference type="BioGRID" id="108852">
    <property type="interactions" value="1"/>
</dbReference>
<dbReference type="BioGRID" id="117808">
    <property type="interactions" value="3"/>
</dbReference>
<dbReference type="BioGRID" id="570130">
    <property type="interactions" value="6"/>
</dbReference>
<dbReference type="BioGRID" id="755635">
    <property type="interactions" value="1"/>
</dbReference>
<dbReference type="iPTMnet" id="P0CL80"/>
<dbReference type="PhosphoSitePlus" id="P0CL80"/>
<dbReference type="BioMuta" id="GAGE12F"/>
<dbReference type="DMDM" id="332313379"/>
<dbReference type="jPOST" id="P0CL80"/>
<dbReference type="MassIVE" id="P0CL80"/>
<dbReference type="PeptideAtlas" id="P0CL80"/>
<dbReference type="Pumba" id="P0CL80"/>
<dbReference type="Antibodypedia" id="70742">
    <property type="antibodies" value="15 antibodies from 7 providers"/>
</dbReference>
<dbReference type="DNASU" id="100008586"/>
<dbReference type="DNASU" id="2579"/>
<dbReference type="DNASU" id="26748"/>
<dbReference type="DNASU" id="645073"/>
<dbReference type="Ensembl" id="ENST00000440137.2">
    <molecule id="P0CL80-1"/>
    <property type="protein sequence ID" value="ENSP00000404123.1"/>
    <property type="gene ID" value="ENSG00000236362.9"/>
</dbReference>
<dbReference type="Ensembl" id="ENST00000639028.1">
    <molecule id="P0CL80-1"/>
    <property type="protein sequence ID" value="ENSP00000491865.1"/>
    <property type="gene ID" value="ENSG00000236362.9"/>
</dbReference>
<dbReference type="GeneID" id="100008586"/>
<dbReference type="KEGG" id="hsa:100008586"/>
<dbReference type="KEGG" id="hsa:2579"/>
<dbReference type="KEGG" id="hsa:26748"/>
<dbReference type="KEGG" id="hsa:645073"/>
<dbReference type="MANE-Select" id="ENST00000440137.2">
    <property type="protein sequence ID" value="ENSP00000404123.1"/>
    <property type="RefSeq nucleotide sequence ID" value="NM_001098405.3"/>
    <property type="RefSeq protein sequence ID" value="NP_001091875.1"/>
</dbReference>
<dbReference type="AGR" id="HGNC:31906"/>
<dbReference type="AGR" id="HGNC:31907"/>
<dbReference type="AGR" id="HGNC:4104"/>
<dbReference type="AGR" id="HGNC:4105"/>
<dbReference type="CTD" id="100008586"/>
<dbReference type="CTD" id="2579"/>
<dbReference type="CTD" id="26748"/>
<dbReference type="CTD" id="645073"/>
<dbReference type="DisGeNET" id="100008586"/>
<dbReference type="DisGeNET" id="2579"/>
<dbReference type="DisGeNET" id="26748"/>
<dbReference type="DisGeNET" id="645073"/>
<dbReference type="GeneCards" id="GAGE12F"/>
<dbReference type="HGNC" id="HGNC:31906">
    <property type="gene designation" value="GAGE12F"/>
</dbReference>
<dbReference type="HPA" id="ENSG00000236362">
    <property type="expression patterns" value="Tissue enriched (testis)"/>
</dbReference>
<dbReference type="MIM" id="300730">
    <property type="type" value="gene"/>
</dbReference>
<dbReference type="neXtProt" id="NX_P0CL80"/>
<dbReference type="VEuPathDB" id="HostDB:ENSG00000236362"/>
<dbReference type="HOGENOM" id="CLU_150116_0_0_1"/>
<dbReference type="InParanoid" id="P0CL80"/>
<dbReference type="OrthoDB" id="9539459at2759"/>
<dbReference type="PAN-GO" id="P0CL80">
    <property type="GO annotations" value="0 GO annotations based on evolutionary models"/>
</dbReference>
<dbReference type="PhylomeDB" id="P0CL80"/>
<dbReference type="TreeFam" id="TF340669"/>
<dbReference type="PathwayCommons" id="P0CL80"/>
<dbReference type="SignaLink" id="P0CL80"/>
<dbReference type="BioGRID-ORCS" id="100008586">
    <property type="hits" value="3 hits in 66 CRISPR screens"/>
</dbReference>
<dbReference type="BioGRID-ORCS" id="2579">
    <property type="hits" value="3 hits in 26 CRISPR screens"/>
</dbReference>
<dbReference type="BioGRID-ORCS" id="26748">
    <property type="hits" value="4 hits in 125 CRISPR screens"/>
</dbReference>
<dbReference type="BioGRID-ORCS" id="645073">
    <property type="hits" value="4 hits in 38 CRISPR screens"/>
</dbReference>
<dbReference type="Pharos" id="P0CL80">
    <property type="development level" value="Tdark"/>
</dbReference>
<dbReference type="PRO" id="PR:P0CL80"/>
<dbReference type="Proteomes" id="UP000005640">
    <property type="component" value="Chromosome X"/>
</dbReference>
<dbReference type="RNAct" id="P0CL80">
    <property type="molecule type" value="protein"/>
</dbReference>
<dbReference type="Bgee" id="ENSG00000236362">
    <property type="expression patterns" value="Expressed in right testis and 75 other cell types or tissues"/>
</dbReference>
<dbReference type="ExpressionAtlas" id="P0CL80">
    <property type="expression patterns" value="baseline"/>
</dbReference>
<dbReference type="InterPro" id="IPR031320">
    <property type="entry name" value="GAGE"/>
</dbReference>
<dbReference type="InterPro" id="IPR008625">
    <property type="entry name" value="GAGE_fam"/>
</dbReference>
<dbReference type="PANTHER" id="PTHR14047:SF30">
    <property type="entry name" value="G ANTIGEN 1-RELATED"/>
    <property type="match status" value="1"/>
</dbReference>
<dbReference type="PANTHER" id="PTHR14047">
    <property type="entry name" value="P ANTIGEN FAMILY MEMBER 5-RELATED"/>
    <property type="match status" value="1"/>
</dbReference>
<dbReference type="Pfam" id="PF05831">
    <property type="entry name" value="GAGE"/>
    <property type="match status" value="1"/>
</dbReference>
<dbReference type="SMART" id="SM01379">
    <property type="entry name" value="GAGE"/>
    <property type="match status" value="1"/>
</dbReference>
<evidence type="ECO:0000250" key="1"/>
<evidence type="ECO:0000256" key="2">
    <source>
        <dbReference type="SAM" id="MobiDB-lite"/>
    </source>
</evidence>
<evidence type="ECO:0000303" key="3">
    <source>
    </source>
</evidence>
<evidence type="ECO:0000305" key="4"/>
<organism>
    <name type="scientific">Homo sapiens</name>
    <name type="common">Human</name>
    <dbReference type="NCBI Taxonomy" id="9606"/>
    <lineage>
        <taxon>Eukaryota</taxon>
        <taxon>Metazoa</taxon>
        <taxon>Chordata</taxon>
        <taxon>Craniata</taxon>
        <taxon>Vertebrata</taxon>
        <taxon>Euteleostomi</taxon>
        <taxon>Mammalia</taxon>
        <taxon>Eutheria</taxon>
        <taxon>Euarchontoglires</taxon>
        <taxon>Primates</taxon>
        <taxon>Haplorrhini</taxon>
        <taxon>Catarrhini</taxon>
        <taxon>Hominidae</taxon>
        <taxon>Homo</taxon>
    </lineage>
</organism>
<keyword id="KW-0025">Alternative splicing</keyword>
<keyword id="KW-1185">Reference proteome</keyword>
<feature type="chain" id="PRO_0000311978" description="G antigen 12F">
    <location>
        <begin position="1"/>
        <end position="117"/>
    </location>
</feature>
<feature type="region of interest" description="Disordered" evidence="2">
    <location>
        <begin position="1"/>
        <end position="117"/>
    </location>
</feature>
<feature type="compositionally biased region" description="Acidic residues" evidence="2">
    <location>
        <begin position="32"/>
        <end position="45"/>
    </location>
</feature>
<feature type="compositionally biased region" description="Acidic residues" evidence="2">
    <location>
        <begin position="87"/>
        <end position="96"/>
    </location>
</feature>
<feature type="compositionally biased region" description="Basic and acidic residues" evidence="2">
    <location>
        <begin position="103"/>
        <end position="117"/>
    </location>
</feature>
<feature type="splice variant" id="VSP_040953" description="In isoform 2." evidence="3">
    <location>
        <begin position="69"/>
        <end position="110"/>
    </location>
</feature>